<evidence type="ECO:0000255" key="1">
    <source>
        <dbReference type="HAMAP-Rule" id="MF_00131"/>
    </source>
</evidence>
<name>TRPA_LACLM</name>
<gene>
    <name evidence="1" type="primary">trpA</name>
    <name type="ordered locus">llmg_1042</name>
</gene>
<proteinExistence type="inferred from homology"/>
<reference key="1">
    <citation type="journal article" date="2007" name="J. Bacteriol.">
        <title>The complete genome sequence of the lactic acid bacterial paradigm Lactococcus lactis subsp. cremoris MG1363.</title>
        <authorList>
            <person name="Wegmann U."/>
            <person name="O'Connell-Motherway M."/>
            <person name="Zomer A."/>
            <person name="Buist G."/>
            <person name="Shearman C."/>
            <person name="Canchaya C."/>
            <person name="Ventura M."/>
            <person name="Goesmann A."/>
            <person name="Gasson M.J."/>
            <person name="Kuipers O.P."/>
            <person name="van Sinderen D."/>
            <person name="Kok J."/>
        </authorList>
    </citation>
    <scope>NUCLEOTIDE SEQUENCE [LARGE SCALE GENOMIC DNA]</scope>
    <source>
        <strain>MG1363</strain>
    </source>
</reference>
<accession>A2RK25</accession>
<protein>
    <recommendedName>
        <fullName evidence="1">Tryptophan synthase alpha chain</fullName>
        <ecNumber evidence="1">4.2.1.20</ecNumber>
    </recommendedName>
</protein>
<keyword id="KW-0028">Amino-acid biosynthesis</keyword>
<keyword id="KW-0057">Aromatic amino acid biosynthesis</keyword>
<keyword id="KW-0456">Lyase</keyword>
<keyword id="KW-0822">Tryptophan biosynthesis</keyword>
<feature type="chain" id="PRO_1000018220" description="Tryptophan synthase alpha chain">
    <location>
        <begin position="1"/>
        <end position="253"/>
    </location>
</feature>
<feature type="active site" description="Proton acceptor" evidence="1">
    <location>
        <position position="47"/>
    </location>
</feature>
<feature type="active site" description="Proton acceptor" evidence="1">
    <location>
        <position position="58"/>
    </location>
</feature>
<comment type="function">
    <text evidence="1">The alpha subunit is responsible for the aldol cleavage of indoleglycerol phosphate to indole and glyceraldehyde 3-phosphate.</text>
</comment>
<comment type="catalytic activity">
    <reaction evidence="1">
        <text>(1S,2R)-1-C-(indol-3-yl)glycerol 3-phosphate + L-serine = D-glyceraldehyde 3-phosphate + L-tryptophan + H2O</text>
        <dbReference type="Rhea" id="RHEA:10532"/>
        <dbReference type="ChEBI" id="CHEBI:15377"/>
        <dbReference type="ChEBI" id="CHEBI:33384"/>
        <dbReference type="ChEBI" id="CHEBI:57912"/>
        <dbReference type="ChEBI" id="CHEBI:58866"/>
        <dbReference type="ChEBI" id="CHEBI:59776"/>
        <dbReference type="EC" id="4.2.1.20"/>
    </reaction>
</comment>
<comment type="pathway">
    <text evidence="1">Amino-acid biosynthesis; L-tryptophan biosynthesis; L-tryptophan from chorismate: step 5/5.</text>
</comment>
<comment type="subunit">
    <text evidence="1">Tetramer of two alpha and two beta chains.</text>
</comment>
<comment type="similarity">
    <text evidence="1">Belongs to the TrpA family.</text>
</comment>
<dbReference type="EC" id="4.2.1.20" evidence="1"/>
<dbReference type="EMBL" id="AM406671">
    <property type="protein sequence ID" value="CAL97634.1"/>
    <property type="molecule type" value="Genomic_DNA"/>
</dbReference>
<dbReference type="RefSeq" id="WP_011834966.1">
    <property type="nucleotide sequence ID" value="NC_009004.1"/>
</dbReference>
<dbReference type="SMR" id="A2RK25"/>
<dbReference type="STRING" id="416870.llmg_1042"/>
<dbReference type="KEGG" id="llm:llmg_1042"/>
<dbReference type="eggNOG" id="COG0159">
    <property type="taxonomic scope" value="Bacteria"/>
</dbReference>
<dbReference type="HOGENOM" id="CLU_016734_0_0_9"/>
<dbReference type="OrthoDB" id="9804578at2"/>
<dbReference type="PhylomeDB" id="A2RK25"/>
<dbReference type="UniPathway" id="UPA00035">
    <property type="reaction ID" value="UER00044"/>
</dbReference>
<dbReference type="Proteomes" id="UP000000364">
    <property type="component" value="Chromosome"/>
</dbReference>
<dbReference type="GO" id="GO:0005829">
    <property type="term" value="C:cytosol"/>
    <property type="evidence" value="ECO:0007669"/>
    <property type="project" value="TreeGrafter"/>
</dbReference>
<dbReference type="GO" id="GO:0004834">
    <property type="term" value="F:tryptophan synthase activity"/>
    <property type="evidence" value="ECO:0007669"/>
    <property type="project" value="UniProtKB-UniRule"/>
</dbReference>
<dbReference type="CDD" id="cd04724">
    <property type="entry name" value="Tryptophan_synthase_alpha"/>
    <property type="match status" value="1"/>
</dbReference>
<dbReference type="Gene3D" id="3.20.20.70">
    <property type="entry name" value="Aldolase class I"/>
    <property type="match status" value="1"/>
</dbReference>
<dbReference type="HAMAP" id="MF_00131">
    <property type="entry name" value="Trp_synth_alpha"/>
    <property type="match status" value="1"/>
</dbReference>
<dbReference type="InterPro" id="IPR013785">
    <property type="entry name" value="Aldolase_TIM"/>
</dbReference>
<dbReference type="InterPro" id="IPR011060">
    <property type="entry name" value="RibuloseP-bd_barrel"/>
</dbReference>
<dbReference type="InterPro" id="IPR018204">
    <property type="entry name" value="Trp_synthase_alpha_AS"/>
</dbReference>
<dbReference type="InterPro" id="IPR002028">
    <property type="entry name" value="Trp_synthase_suA"/>
</dbReference>
<dbReference type="NCBIfam" id="TIGR00262">
    <property type="entry name" value="trpA"/>
    <property type="match status" value="1"/>
</dbReference>
<dbReference type="PANTHER" id="PTHR43406:SF1">
    <property type="entry name" value="TRYPTOPHAN SYNTHASE ALPHA CHAIN, CHLOROPLASTIC"/>
    <property type="match status" value="1"/>
</dbReference>
<dbReference type="PANTHER" id="PTHR43406">
    <property type="entry name" value="TRYPTOPHAN SYNTHASE, ALPHA CHAIN"/>
    <property type="match status" value="1"/>
</dbReference>
<dbReference type="Pfam" id="PF00290">
    <property type="entry name" value="Trp_syntA"/>
    <property type="match status" value="1"/>
</dbReference>
<dbReference type="SUPFAM" id="SSF51366">
    <property type="entry name" value="Ribulose-phoshate binding barrel"/>
    <property type="match status" value="1"/>
</dbReference>
<dbReference type="PROSITE" id="PS00167">
    <property type="entry name" value="TRP_SYNTHASE_ALPHA"/>
    <property type="match status" value="1"/>
</dbReference>
<organism>
    <name type="scientific">Lactococcus lactis subsp. cremoris (strain MG1363)</name>
    <dbReference type="NCBI Taxonomy" id="416870"/>
    <lineage>
        <taxon>Bacteria</taxon>
        <taxon>Bacillati</taxon>
        <taxon>Bacillota</taxon>
        <taxon>Bacilli</taxon>
        <taxon>Lactobacillales</taxon>
        <taxon>Streptococcaceae</taxon>
        <taxon>Lactococcus</taxon>
        <taxon>Lactococcus cremoris subsp. cremoris</taxon>
    </lineage>
</organism>
<sequence length="253" mass="27651">MKTLQAKLSNKKNNFVPYIMAGDHERGLEGLNETIQLLEQAGSSAIEIGVPFSDPVADGPVIEQAGLRALAKNVSLSKILDSLKSIETEVPLVIMTYFNPVYQFGIENFVAALESTAVKGLIIPDLPKEHEAYIKPFITDKDICLVPLVSLTTPISRQKELVVDAEGFIYAVAINGVTGKENAYSNQLDHHLETLSKLTDIPVLTGFGISTLTDVERFNKVSAGVIVGSKIVRDLHENKESDVIKFIENAINF</sequence>